<dbReference type="EMBL" id="AJ720443">
    <property type="protein sequence ID" value="CAG32102.1"/>
    <property type="molecule type" value="mRNA"/>
</dbReference>
<dbReference type="RefSeq" id="NP_001026201.1">
    <property type="nucleotide sequence ID" value="NM_001031030.2"/>
</dbReference>
<dbReference type="RefSeq" id="XP_040508677.1">
    <property type="nucleotide sequence ID" value="XM_040652743.2"/>
</dbReference>
<dbReference type="RefSeq" id="XP_040508678.1">
    <property type="nucleotide sequence ID" value="XM_040652744.2"/>
</dbReference>
<dbReference type="RefSeq" id="XP_040508679.1">
    <property type="nucleotide sequence ID" value="XM_040652745.2"/>
</dbReference>
<dbReference type="RefSeq" id="XP_040508680.1">
    <property type="nucleotide sequence ID" value="XM_040652746.2"/>
</dbReference>
<dbReference type="RefSeq" id="XP_040508681.1">
    <property type="nucleotide sequence ID" value="XM_040652747.2"/>
</dbReference>
<dbReference type="RefSeq" id="XP_040508683.1">
    <property type="nucleotide sequence ID" value="XM_040652749.2"/>
</dbReference>
<dbReference type="RefSeq" id="XP_046760095.1">
    <property type="nucleotide sequence ID" value="XM_046904139.1"/>
</dbReference>
<dbReference type="RefSeq" id="XP_046760096.1">
    <property type="nucleotide sequence ID" value="XM_046904140.1"/>
</dbReference>
<dbReference type="RefSeq" id="XP_046760097.1">
    <property type="nucleotide sequence ID" value="XM_046904141.1"/>
</dbReference>
<dbReference type="FunCoup" id="Q5ZJJ1">
    <property type="interactions" value="24"/>
</dbReference>
<dbReference type="STRING" id="9031.ENSGALP00000067902"/>
<dbReference type="PaxDb" id="9031-ENSGALP00000000747"/>
<dbReference type="Ensembl" id="ENSGALT00010063115.1">
    <property type="protein sequence ID" value="ENSGALP00010038961.1"/>
    <property type="gene ID" value="ENSGALG00010025892.1"/>
</dbReference>
<dbReference type="GeneID" id="421172"/>
<dbReference type="KEGG" id="gga:421172"/>
<dbReference type="CTD" id="9877"/>
<dbReference type="VEuPathDB" id="HostDB:geneid_421172"/>
<dbReference type="eggNOG" id="KOG4791">
    <property type="taxonomic scope" value="Eukaryota"/>
</dbReference>
<dbReference type="GeneTree" id="ENSGT00920000149095"/>
<dbReference type="InParanoid" id="Q5ZJJ1"/>
<dbReference type="OMA" id="NVRPSVM"/>
<dbReference type="OrthoDB" id="9118945at2759"/>
<dbReference type="PhylomeDB" id="Q5ZJJ1"/>
<dbReference type="PRO" id="PR:Q5ZJJ1"/>
<dbReference type="Proteomes" id="UP000000539">
    <property type="component" value="Chromosome 26"/>
</dbReference>
<dbReference type="GO" id="GO:0016607">
    <property type="term" value="C:nuclear speck"/>
    <property type="evidence" value="ECO:0007669"/>
    <property type="project" value="UniProtKB-SubCell"/>
</dbReference>
<dbReference type="GO" id="GO:0008270">
    <property type="term" value="F:zinc ion binding"/>
    <property type="evidence" value="ECO:0007669"/>
    <property type="project" value="UniProtKB-KW"/>
</dbReference>
<dbReference type="GO" id="GO:0016973">
    <property type="term" value="P:poly(A)+ mRNA export from nucleus"/>
    <property type="evidence" value="ECO:0000318"/>
    <property type="project" value="GO_Central"/>
</dbReference>
<dbReference type="FunFam" id="4.10.1000.10:FF:000024">
    <property type="entry name" value="Zinc finger CCCH domain-containing protein 11A"/>
    <property type="match status" value="1"/>
</dbReference>
<dbReference type="Gene3D" id="4.10.1000.10">
    <property type="entry name" value="Zinc finger, CCCH-type"/>
    <property type="match status" value="1"/>
</dbReference>
<dbReference type="InterPro" id="IPR041686">
    <property type="entry name" value="Znf-CCCH_3"/>
</dbReference>
<dbReference type="InterPro" id="IPR000571">
    <property type="entry name" value="Znf_CCCH"/>
</dbReference>
<dbReference type="PANTHER" id="PTHR15725:SF14">
    <property type="entry name" value="ZINC FINGER CCCH DOMAIN-CONTAINING PROTEIN 11A"/>
    <property type="match status" value="1"/>
</dbReference>
<dbReference type="PANTHER" id="PTHR15725">
    <property type="entry name" value="ZN-FINGER, C-X8-C-X5-C-X3-H TYPE-CONTAINING"/>
    <property type="match status" value="1"/>
</dbReference>
<dbReference type="Pfam" id="PF15663">
    <property type="entry name" value="zf-CCCH_3"/>
    <property type="match status" value="1"/>
</dbReference>
<dbReference type="SMART" id="SM00356">
    <property type="entry name" value="ZnF_C3H1"/>
    <property type="match status" value="3"/>
</dbReference>
<dbReference type="PROSITE" id="PS50103">
    <property type="entry name" value="ZF_C3H1"/>
    <property type="match status" value="3"/>
</dbReference>
<sequence>MSKQGDDCYFYFYSTCNKGDNCPFRHCEAALGNETICTLWKEGRCFRNVCRFRHMEIDKKRSEIPCFWENQPGGCQKSNCAFHHTKGRYVDGLFLPPSKTTLPSPPESADDDLKAAQITLQQNKLSVQSNPSPQLRGVMKVENSENVPSPTHPPVVINAADDDEDDDDQLSEEGEETKTPVQQPAEENHNGLRIISTRKSNADTKQDDSLNFGIKTLEEIKLKKQKEKTKKQSEGPSGVPAHPLQSRTVPVPEKENVRTVVRTVTLSAKQGEEPVIRLNIAEKPGKRKGSVADVSGLPLKRSLAERLGRKIEVDKAPRREKGAKPAGEIHVKTLEEIRLERANQRGETLTAPQAEVCCKVEDPSSGVRPPPAVRIKTFSEALAERKQRRLEEEKQKLEEFLTEKRAEGERKKQRILPPSVPGKVKLEEPTRKIKPLEEVHIKTLEEIKQEKALRMQQSGENVPAPAAQPGPAPAGRKLLRITKLAAPGKEEKKTVELSRASPKAVSAPAEPSNQSAPNSKAQVKSLEGTVKEKLQLRQPEKLKKEVAAVPSATEETVKAKCKVCVKPSDSKASTPTKRALKRKAAEISPSAVAAVKPLSSTETEEPPAKKAALTAAPALPEDSLLTKPGVEKPPSSLELQLGSQADSVEQSGDSSSASASSQSVAKAQQLSSTGAGKAPLSVEDDFEKLIWEISGGKLEAEIDLDPGKDEDDLLLELSEMIDS</sequence>
<name>ZC11A_CHICK</name>
<gene>
    <name type="primary">ZC3H11A</name>
    <name type="ORF">RCJMB04_17l7</name>
</gene>
<proteinExistence type="evidence at transcript level"/>
<keyword id="KW-0175">Coiled coil</keyword>
<keyword id="KW-0479">Metal-binding</keyword>
<keyword id="KW-0509">mRNA transport</keyword>
<keyword id="KW-0539">Nucleus</keyword>
<keyword id="KW-1185">Reference proteome</keyword>
<keyword id="KW-0677">Repeat</keyword>
<keyword id="KW-0813">Transport</keyword>
<keyword id="KW-0862">Zinc</keyword>
<keyword id="KW-0863">Zinc-finger</keyword>
<protein>
    <recommendedName>
        <fullName>Zinc finger CCCH domain-containing protein 11A</fullName>
    </recommendedName>
</protein>
<evidence type="ECO:0000250" key="1">
    <source>
        <dbReference type="UniProtKB" id="O75152"/>
    </source>
</evidence>
<evidence type="ECO:0000255" key="2"/>
<evidence type="ECO:0000255" key="3">
    <source>
        <dbReference type="PROSITE-ProRule" id="PRU00723"/>
    </source>
</evidence>
<evidence type="ECO:0000256" key="4">
    <source>
        <dbReference type="SAM" id="MobiDB-lite"/>
    </source>
</evidence>
<accession>Q5ZJJ1</accession>
<comment type="function">
    <text evidence="1">Through its association with TREX complex components, may participate in the export and post-transcriptional coordination of selected mRNA transcripts. Binds RNA.</text>
</comment>
<comment type="subcellular location">
    <subcellularLocation>
        <location evidence="1">Nucleus speckle</location>
    </subcellularLocation>
    <text evidence="1">Retained in nuclear speckles though interaction with PABPN1.</text>
</comment>
<reference key="1">
    <citation type="journal article" date="2005" name="Genome Biol.">
        <title>Full-length cDNAs from chicken bursal lymphocytes to facilitate gene function analysis.</title>
        <authorList>
            <person name="Caldwell R.B."/>
            <person name="Kierzek A.M."/>
            <person name="Arakawa H."/>
            <person name="Bezzubov Y."/>
            <person name="Zaim J."/>
            <person name="Fiedler P."/>
            <person name="Kutter S."/>
            <person name="Blagodatski A."/>
            <person name="Kostovska D."/>
            <person name="Koter M."/>
            <person name="Plachy J."/>
            <person name="Carninci P."/>
            <person name="Hayashizaki Y."/>
            <person name="Buerstedde J.-M."/>
        </authorList>
    </citation>
    <scope>NUCLEOTIDE SEQUENCE [LARGE SCALE MRNA]</scope>
    <source>
        <strain>CB</strain>
        <tissue>Bursa of Fabricius</tissue>
    </source>
</reference>
<organism>
    <name type="scientific">Gallus gallus</name>
    <name type="common">Chicken</name>
    <dbReference type="NCBI Taxonomy" id="9031"/>
    <lineage>
        <taxon>Eukaryota</taxon>
        <taxon>Metazoa</taxon>
        <taxon>Chordata</taxon>
        <taxon>Craniata</taxon>
        <taxon>Vertebrata</taxon>
        <taxon>Euteleostomi</taxon>
        <taxon>Archelosauria</taxon>
        <taxon>Archosauria</taxon>
        <taxon>Dinosauria</taxon>
        <taxon>Saurischia</taxon>
        <taxon>Theropoda</taxon>
        <taxon>Coelurosauria</taxon>
        <taxon>Aves</taxon>
        <taxon>Neognathae</taxon>
        <taxon>Galloanserae</taxon>
        <taxon>Galliformes</taxon>
        <taxon>Phasianidae</taxon>
        <taxon>Phasianinae</taxon>
        <taxon>Gallus</taxon>
    </lineage>
</organism>
<feature type="chain" id="PRO_0000213908" description="Zinc finger CCCH domain-containing protein 11A">
    <location>
        <begin position="1"/>
        <end position="723"/>
    </location>
</feature>
<feature type="zinc finger region" description="C3H1-type 1" evidence="3">
    <location>
        <begin position="2"/>
        <end position="29"/>
    </location>
</feature>
<feature type="zinc finger region" description="C3H1-type 2" evidence="3">
    <location>
        <begin position="31"/>
        <end position="57"/>
    </location>
</feature>
<feature type="zinc finger region" description="C3H1-type 3" evidence="3">
    <location>
        <begin position="60"/>
        <end position="87"/>
    </location>
</feature>
<feature type="region of interest" description="Disordered" evidence="4">
    <location>
        <begin position="142"/>
        <end position="208"/>
    </location>
</feature>
<feature type="region of interest" description="Disordered" evidence="4">
    <location>
        <begin position="223"/>
        <end position="256"/>
    </location>
</feature>
<feature type="region of interest" description="Disordered" evidence="4">
    <location>
        <begin position="404"/>
        <end position="428"/>
    </location>
</feature>
<feature type="region of interest" description="Disordered" evidence="4">
    <location>
        <begin position="450"/>
        <end position="526"/>
    </location>
</feature>
<feature type="region of interest" description="Disordered" evidence="4">
    <location>
        <begin position="565"/>
        <end position="681"/>
    </location>
</feature>
<feature type="coiled-coil region" evidence="2">
    <location>
        <begin position="376"/>
        <end position="411"/>
    </location>
</feature>
<feature type="compositionally biased region" description="Acidic residues" evidence="4">
    <location>
        <begin position="160"/>
        <end position="175"/>
    </location>
</feature>
<feature type="compositionally biased region" description="Polar residues" evidence="4">
    <location>
        <begin position="511"/>
        <end position="522"/>
    </location>
</feature>
<feature type="compositionally biased region" description="Low complexity" evidence="4">
    <location>
        <begin position="609"/>
        <end position="620"/>
    </location>
</feature>
<feature type="compositionally biased region" description="Polar residues" evidence="4">
    <location>
        <begin position="637"/>
        <end position="649"/>
    </location>
</feature>
<feature type="compositionally biased region" description="Low complexity" evidence="4">
    <location>
        <begin position="650"/>
        <end position="672"/>
    </location>
</feature>